<keyword id="KW-0027">Amidation</keyword>
<keyword id="KW-0044">Antibiotic</keyword>
<keyword id="KW-0929">Antimicrobial</keyword>
<keyword id="KW-1213">G-protein coupled receptor impairing toxin</keyword>
<keyword id="KW-0391">Immunity</keyword>
<keyword id="KW-0399">Innate immunity</keyword>
<keyword id="KW-0472">Membrane</keyword>
<keyword id="KW-0677">Repeat</keyword>
<keyword id="KW-0964">Secreted</keyword>
<keyword id="KW-0732">Signal</keyword>
<keyword id="KW-1052">Target cell membrane</keyword>
<keyword id="KW-1053">Target membrane</keyword>
<keyword id="KW-0800">Toxin</keyword>
<feature type="signal peptide" evidence="3">
    <location>
        <begin position="1"/>
        <end position="27"/>
    </location>
</feature>
<feature type="propeptide" id="PRO_0000458811" evidence="7">
    <location>
        <begin position="28"/>
        <end position="45"/>
    </location>
</feature>
<feature type="peptide" id="PRO_5004532739" description="Mastoparan-D" evidence="7">
    <location>
        <begin position="46"/>
        <end position="59"/>
    </location>
</feature>
<feature type="repeat" description="AXPX 1" evidence="6">
    <location>
        <begin position="27"/>
        <end position="30"/>
    </location>
</feature>
<feature type="repeat" description="AXPX 2" evidence="6">
    <location>
        <begin position="31"/>
        <end position="34"/>
    </location>
</feature>
<feature type="repeat" description="AXPX 3" evidence="6">
    <location>
        <begin position="35"/>
        <end position="38"/>
    </location>
</feature>
<feature type="repeat" description="AXPX 4" evidence="6">
    <location>
        <begin position="41"/>
        <end position="44"/>
    </location>
</feature>
<feature type="modified residue" description="Leucine amide" evidence="7">
    <location>
        <position position="59"/>
    </location>
</feature>
<accession>S4S3G3</accession>
<dbReference type="EMBL" id="HQ168024">
    <property type="protein sequence ID" value="AEM43052.1"/>
    <property type="molecule type" value="mRNA"/>
</dbReference>
<dbReference type="SMR" id="S4S3G3"/>
<dbReference type="GO" id="GO:0005576">
    <property type="term" value="C:extracellular region"/>
    <property type="evidence" value="ECO:0007669"/>
    <property type="project" value="UniProtKB-SubCell"/>
</dbReference>
<dbReference type="GO" id="GO:0016020">
    <property type="term" value="C:membrane"/>
    <property type="evidence" value="ECO:0007669"/>
    <property type="project" value="UniProtKB-KW"/>
</dbReference>
<dbReference type="GO" id="GO:0044218">
    <property type="term" value="C:other organism cell membrane"/>
    <property type="evidence" value="ECO:0007669"/>
    <property type="project" value="UniProtKB-KW"/>
</dbReference>
<dbReference type="GO" id="GO:0090729">
    <property type="term" value="F:toxin activity"/>
    <property type="evidence" value="ECO:0007669"/>
    <property type="project" value="UniProtKB-KW"/>
</dbReference>
<dbReference type="GO" id="GO:0042742">
    <property type="term" value="P:defense response to bacterium"/>
    <property type="evidence" value="ECO:0007669"/>
    <property type="project" value="UniProtKB-KW"/>
</dbReference>
<dbReference type="GO" id="GO:0045087">
    <property type="term" value="P:innate immune response"/>
    <property type="evidence" value="ECO:0007669"/>
    <property type="project" value="UniProtKB-KW"/>
</dbReference>
<name>MAST_VESDU</name>
<protein>
    <recommendedName>
        <fullName evidence="5">Mastoparan-D</fullName>
        <shortName evidence="5">MP-D</shortName>
    </recommendedName>
</protein>
<comment type="function">
    <text evidence="1 2 4">Antimicrobial and mast cell degranulating peptide. Has broad spectrum antibacterial activity against both Gram-positive and Gram-negative bacteria (S.aureus MIC=24-32 ug/ml, S.xylosus MIC=2 ug/ml, S.alactolyticus MIC=16 ug/ml, C.koseri MIC=4 ug/ml, E.coli MIC=8 ug/ml, K.pneumoniae MIC=32 ug/ml, P.aerugiosa MIC=128 ug/ml, S.choleraesuis MIC=16 ug/ml, S.typhimurium MIC=32 ug/ml, V.parahamelytics MIC=32 ug/ml). Affects membrane permeability of E.coli. Shows hemolytic activities on sheep, chicken and human erythrocytes (PubMed:21884742). Its mast cell degranulation activity may be related to the activation of G-protein coupled receptors in mast cells as well as interaction with other proteins located in cell endosomal membranes in the mast cells (By similarity).</text>
</comment>
<comment type="subcellular location">
    <subcellularLocation>
        <location evidence="7">Secreted</location>
    </subcellularLocation>
    <subcellularLocation>
        <location evidence="6">Target cell membrane</location>
    </subcellularLocation>
    <text evidence="7">Assumes an amphipathic alpha-helical conformation in a membrane-like environment.</text>
</comment>
<comment type="tissue specificity">
    <text evidence="7">Expressed by the venom gland.</text>
</comment>
<comment type="similarity">
    <text evidence="6">Belongs to the MCD family. Mastoparan subfamily.</text>
</comment>
<reference evidence="8" key="1">
    <citation type="journal article" date="2011" name="Peptides">
        <title>Structural and biological characterization of mastoparans in the venom of Vespa species in Taiwan.</title>
        <authorList>
            <person name="Lin C.H."/>
            <person name="Tzen J.T."/>
            <person name="Shyu C.L."/>
            <person name="Yang M.J."/>
            <person name="Tu W.C."/>
        </authorList>
    </citation>
    <scope>NUCLEOTIDE SEQUENCE [MRNA]</scope>
    <scope>FUNCTION</scope>
    <scope>PROBABLE AMIDATION AT LEU-59</scope>
    <scope>SYNTHESIS OF 46-59</scope>
    <source>
        <tissue>Venom gland</tissue>
    </source>
</reference>
<sequence length="60" mass="6214">MKNTILILFTAFIALLGFFGMSAEALADPIADPVAGPNPEADPEAINLKAIAAFAKKLLG</sequence>
<organism>
    <name type="scientific">Vespa ducalis</name>
    <name type="common">Black-tailed hornet</name>
    <dbReference type="NCBI Taxonomy" id="1075778"/>
    <lineage>
        <taxon>Eukaryota</taxon>
        <taxon>Metazoa</taxon>
        <taxon>Ecdysozoa</taxon>
        <taxon>Arthropoda</taxon>
        <taxon>Hexapoda</taxon>
        <taxon>Insecta</taxon>
        <taxon>Pterygota</taxon>
        <taxon>Neoptera</taxon>
        <taxon>Endopterygota</taxon>
        <taxon>Hymenoptera</taxon>
        <taxon>Apocrita</taxon>
        <taxon>Aculeata</taxon>
        <taxon>Vespoidea</taxon>
        <taxon>Vespidae</taxon>
        <taxon>Vespinae</taxon>
        <taxon>Vespa</taxon>
    </lineage>
</organism>
<evidence type="ECO:0000250" key="1">
    <source>
        <dbReference type="UniProtKB" id="P01514"/>
    </source>
</evidence>
<evidence type="ECO:0000250" key="2">
    <source>
        <dbReference type="UniProtKB" id="P84914"/>
    </source>
</evidence>
<evidence type="ECO:0000255" key="3"/>
<evidence type="ECO:0000269" key="4">
    <source>
    </source>
</evidence>
<evidence type="ECO:0000303" key="5">
    <source>
    </source>
</evidence>
<evidence type="ECO:0000305" key="6"/>
<evidence type="ECO:0000305" key="7">
    <source>
    </source>
</evidence>
<evidence type="ECO:0000312" key="8">
    <source>
        <dbReference type="EMBL" id="AEM43052.1"/>
    </source>
</evidence>
<proteinExistence type="evidence at protein level"/>